<name>SIR2_MOUSE</name>
<accession>Q8VDQ8</accession>
<accession>E9PXF5</accession>
<accession>Q9CXS5</accession>
<accession>Q9EQ18</accession>
<accession>Q9ERJ9</accession>
<accession>U5TP50</accession>
<feature type="initiator methionine" description="Removed" evidence="3">
    <location>
        <position position="1"/>
    </location>
</feature>
<feature type="chain" id="PRO_0000110259" description="NAD-dependent protein deacetylase sirtuin-2">
    <location>
        <begin position="2"/>
        <end position="389"/>
    </location>
</feature>
<feature type="domain" description="Deacetylase sirtuin-type" evidence="4">
    <location>
        <begin position="57"/>
        <end position="338"/>
    </location>
</feature>
<feature type="region of interest" description="Disordered" evidence="5">
    <location>
        <begin position="1"/>
        <end position="34"/>
    </location>
</feature>
<feature type="region of interest" description="Disordered" evidence="5">
    <location>
        <begin position="350"/>
        <end position="389"/>
    </location>
</feature>
<feature type="short sequence motif" description="Nuclear export signal" evidence="1">
    <location>
        <begin position="41"/>
        <end position="51"/>
    </location>
</feature>
<feature type="compositionally biased region" description="Polar residues" evidence="5">
    <location>
        <begin position="353"/>
        <end position="369"/>
    </location>
</feature>
<feature type="compositionally biased region" description="Basic and acidic residues" evidence="5">
    <location>
        <begin position="378"/>
        <end position="389"/>
    </location>
</feature>
<feature type="active site" description="Proton acceptor" evidence="4">
    <location>
        <position position="187"/>
    </location>
</feature>
<feature type="binding site" evidence="3">
    <location>
        <begin position="85"/>
        <end position="89"/>
    </location>
    <ligand>
        <name>NAD(+)</name>
        <dbReference type="ChEBI" id="CHEBI:57540"/>
    </ligand>
</feature>
<feature type="binding site" evidence="3">
    <location>
        <begin position="95"/>
        <end position="97"/>
    </location>
    <ligand>
        <name>NAD(+)</name>
        <dbReference type="ChEBI" id="CHEBI:57540"/>
    </ligand>
</feature>
<feature type="binding site" evidence="3">
    <location>
        <begin position="167"/>
        <end position="170"/>
    </location>
    <ligand>
        <name>NAD(+)</name>
        <dbReference type="ChEBI" id="CHEBI:57540"/>
    </ligand>
</feature>
<feature type="binding site" evidence="4">
    <location>
        <position position="195"/>
    </location>
    <ligand>
        <name>Zn(2+)</name>
        <dbReference type="ChEBI" id="CHEBI:29105"/>
    </ligand>
</feature>
<feature type="binding site" evidence="4">
    <location>
        <position position="200"/>
    </location>
    <ligand>
        <name>Zn(2+)</name>
        <dbReference type="ChEBI" id="CHEBI:29105"/>
    </ligand>
</feature>
<feature type="binding site" evidence="4">
    <location>
        <position position="221"/>
    </location>
    <ligand>
        <name>Zn(2+)</name>
        <dbReference type="ChEBI" id="CHEBI:29105"/>
    </ligand>
</feature>
<feature type="binding site" evidence="4">
    <location>
        <position position="224"/>
    </location>
    <ligand>
        <name>Zn(2+)</name>
        <dbReference type="ChEBI" id="CHEBI:29105"/>
    </ligand>
</feature>
<feature type="binding site" evidence="3">
    <location>
        <begin position="262"/>
        <end position="263"/>
    </location>
    <ligand>
        <name>NAD(+)</name>
        <dbReference type="ChEBI" id="CHEBI:57540"/>
    </ligand>
</feature>
<feature type="binding site" evidence="3">
    <location>
        <begin position="286"/>
        <end position="288"/>
    </location>
    <ligand>
        <name>NAD(+)</name>
        <dbReference type="ChEBI" id="CHEBI:57540"/>
    </ligand>
</feature>
<feature type="binding site" evidence="3">
    <location>
        <position position="324"/>
    </location>
    <ligand>
        <name>NAD(+)</name>
        <dbReference type="ChEBI" id="CHEBI:57540"/>
    </ligand>
</feature>
<feature type="modified residue" description="N-acetylalanine" evidence="3">
    <location>
        <position position="2"/>
    </location>
</feature>
<feature type="modified residue" description="Phosphoserine" evidence="25">
    <location>
        <position position="23"/>
    </location>
</feature>
<feature type="modified residue" description="Phosphoserine" evidence="25">
    <location>
        <position position="25"/>
    </location>
</feature>
<feature type="modified residue" description="Phosphothreonine" evidence="25">
    <location>
        <position position="27"/>
    </location>
</feature>
<feature type="modified residue" description="Phosphoserine" evidence="2">
    <location>
        <position position="53"/>
    </location>
</feature>
<feature type="modified residue" description="Phosphoserine" evidence="2">
    <location>
        <position position="100"/>
    </location>
</feature>
<feature type="modified residue" description="Phosphoserine" evidence="25">
    <location>
        <position position="368"/>
    </location>
</feature>
<feature type="modified residue" description="Phosphoserine" evidence="25">
    <location>
        <position position="372"/>
    </location>
</feature>
<feature type="splice variant" id="VSP_008729" description="In isoform 2." evidence="22">
    <location>
        <begin position="1"/>
        <end position="37"/>
    </location>
</feature>
<feature type="splice variant" id="VSP_055329" description="In isoform 4." evidence="24">
    <original>PSDPLETQAGKVQEAQDSDSDTEGGATGGEAEMDFLRNLFTQTLGLGSQKERLLDELTLEGVTRYMQSERC</original>
    <variation>R</variation>
    <location>
        <begin position="6"/>
        <end position="76"/>
    </location>
</feature>
<feature type="splice variant" id="VSP_055330" description="In isoform 3." evidence="23">
    <location>
        <begin position="236"/>
        <end position="389"/>
    </location>
</feature>
<feature type="mutagenesis site" description="Abolishes deacetylation of FOXO3. Does not inhibit interaction with FOXO3." evidence="8 15">
    <original>H</original>
    <variation>A</variation>
    <location>
        <position position="187"/>
    </location>
</feature>
<feature type="sequence conflict" description="In Ref. 1; AAG32038." evidence="24" ref="1">
    <original>P</original>
    <variation>L</variation>
    <location>
        <position position="230"/>
    </location>
</feature>
<feature type="sequence conflict" description="In Ref. 5; AAH21439." evidence="24" ref="5">
    <original>S</original>
    <variation>P</variation>
    <location>
        <position position="241"/>
    </location>
</feature>
<organism>
    <name type="scientific">Mus musculus</name>
    <name type="common">Mouse</name>
    <dbReference type="NCBI Taxonomy" id="10090"/>
    <lineage>
        <taxon>Eukaryota</taxon>
        <taxon>Metazoa</taxon>
        <taxon>Chordata</taxon>
        <taxon>Craniata</taxon>
        <taxon>Vertebrata</taxon>
        <taxon>Euteleostomi</taxon>
        <taxon>Mammalia</taxon>
        <taxon>Eutheria</taxon>
        <taxon>Euarchontoglires</taxon>
        <taxon>Glires</taxon>
        <taxon>Rodentia</taxon>
        <taxon>Myomorpha</taxon>
        <taxon>Muroidea</taxon>
        <taxon>Muridae</taxon>
        <taxon>Murinae</taxon>
        <taxon>Mus</taxon>
        <taxon>Mus</taxon>
    </lineage>
</organism>
<protein>
    <recommendedName>
        <fullName>NAD-dependent protein deacetylase sirtuin-2</fullName>
        <ecNumber evidence="4 8 9 11 15 21">2.3.1.286</ecNumber>
    </recommendedName>
    <alternativeName>
        <fullName evidence="24">NAD-dependent protein defatty-acylase sirtuin-2</fullName>
        <ecNumber evidence="3">2.3.1.-</ecNumber>
    </alternativeName>
    <alternativeName>
        <fullName>Regulatory protein SIR2 homolog 2</fullName>
    </alternativeName>
    <alternativeName>
        <fullName>SIR2-like protein 2</fullName>
        <shortName>mSIR2L2</shortName>
    </alternativeName>
</protein>
<gene>
    <name type="primary">Sirt2</name>
    <name type="synonym">Sir2l2</name>
</gene>
<proteinExistence type="evidence at protein level"/>
<reference key="1">
    <citation type="journal article" date="2000" name="Genomics">
        <title>Cloning and characterization of two mouse genes with homology to the yeast sir2 gene.</title>
        <authorList>
            <person name="Yang Y.H."/>
            <person name="Chen Y.H."/>
            <person name="Zhang C.Y."/>
            <person name="Nimmakayalu M.A."/>
            <person name="Ward D.C."/>
            <person name="Weissman S."/>
        </authorList>
    </citation>
    <scope>NUCLEOTIDE SEQUENCE [GENOMIC DNA / MRNA] (ISOFORM 1)</scope>
    <scope>SUBCELLULAR LOCATION</scope>
    <source>
        <strain>129/Ola</strain>
    </source>
</reference>
<reference key="2">
    <citation type="journal article" date="2005" name="Science">
        <title>The transcriptional landscape of the mammalian genome.</title>
        <authorList>
            <person name="Carninci P."/>
            <person name="Kasukawa T."/>
            <person name="Katayama S."/>
            <person name="Gough J."/>
            <person name="Frith M.C."/>
            <person name="Maeda N."/>
            <person name="Oyama R."/>
            <person name="Ravasi T."/>
            <person name="Lenhard B."/>
            <person name="Wells C."/>
            <person name="Kodzius R."/>
            <person name="Shimokawa K."/>
            <person name="Bajic V.B."/>
            <person name="Brenner S.E."/>
            <person name="Batalov S."/>
            <person name="Forrest A.R."/>
            <person name="Zavolan M."/>
            <person name="Davis M.J."/>
            <person name="Wilming L.G."/>
            <person name="Aidinis V."/>
            <person name="Allen J.E."/>
            <person name="Ambesi-Impiombato A."/>
            <person name="Apweiler R."/>
            <person name="Aturaliya R.N."/>
            <person name="Bailey T.L."/>
            <person name="Bansal M."/>
            <person name="Baxter L."/>
            <person name="Beisel K.W."/>
            <person name="Bersano T."/>
            <person name="Bono H."/>
            <person name="Chalk A.M."/>
            <person name="Chiu K.P."/>
            <person name="Choudhary V."/>
            <person name="Christoffels A."/>
            <person name="Clutterbuck D.R."/>
            <person name="Crowe M.L."/>
            <person name="Dalla E."/>
            <person name="Dalrymple B.P."/>
            <person name="de Bono B."/>
            <person name="Della Gatta G."/>
            <person name="di Bernardo D."/>
            <person name="Down T."/>
            <person name="Engstrom P."/>
            <person name="Fagiolini M."/>
            <person name="Faulkner G."/>
            <person name="Fletcher C.F."/>
            <person name="Fukushima T."/>
            <person name="Furuno M."/>
            <person name="Futaki S."/>
            <person name="Gariboldi M."/>
            <person name="Georgii-Hemming P."/>
            <person name="Gingeras T.R."/>
            <person name="Gojobori T."/>
            <person name="Green R.E."/>
            <person name="Gustincich S."/>
            <person name="Harbers M."/>
            <person name="Hayashi Y."/>
            <person name="Hensch T.K."/>
            <person name="Hirokawa N."/>
            <person name="Hill D."/>
            <person name="Huminiecki L."/>
            <person name="Iacono M."/>
            <person name="Ikeo K."/>
            <person name="Iwama A."/>
            <person name="Ishikawa T."/>
            <person name="Jakt M."/>
            <person name="Kanapin A."/>
            <person name="Katoh M."/>
            <person name="Kawasawa Y."/>
            <person name="Kelso J."/>
            <person name="Kitamura H."/>
            <person name="Kitano H."/>
            <person name="Kollias G."/>
            <person name="Krishnan S.P."/>
            <person name="Kruger A."/>
            <person name="Kummerfeld S.K."/>
            <person name="Kurochkin I.V."/>
            <person name="Lareau L.F."/>
            <person name="Lazarevic D."/>
            <person name="Lipovich L."/>
            <person name="Liu J."/>
            <person name="Liuni S."/>
            <person name="McWilliam S."/>
            <person name="Madan Babu M."/>
            <person name="Madera M."/>
            <person name="Marchionni L."/>
            <person name="Matsuda H."/>
            <person name="Matsuzawa S."/>
            <person name="Miki H."/>
            <person name="Mignone F."/>
            <person name="Miyake S."/>
            <person name="Morris K."/>
            <person name="Mottagui-Tabar S."/>
            <person name="Mulder N."/>
            <person name="Nakano N."/>
            <person name="Nakauchi H."/>
            <person name="Ng P."/>
            <person name="Nilsson R."/>
            <person name="Nishiguchi S."/>
            <person name="Nishikawa S."/>
            <person name="Nori F."/>
            <person name="Ohara O."/>
            <person name="Okazaki Y."/>
            <person name="Orlando V."/>
            <person name="Pang K.C."/>
            <person name="Pavan W.J."/>
            <person name="Pavesi G."/>
            <person name="Pesole G."/>
            <person name="Petrovsky N."/>
            <person name="Piazza S."/>
            <person name="Reed J."/>
            <person name="Reid J.F."/>
            <person name="Ring B.Z."/>
            <person name="Ringwald M."/>
            <person name="Rost B."/>
            <person name="Ruan Y."/>
            <person name="Salzberg S.L."/>
            <person name="Sandelin A."/>
            <person name="Schneider C."/>
            <person name="Schoenbach C."/>
            <person name="Sekiguchi K."/>
            <person name="Semple C.A."/>
            <person name="Seno S."/>
            <person name="Sessa L."/>
            <person name="Sheng Y."/>
            <person name="Shibata Y."/>
            <person name="Shimada H."/>
            <person name="Shimada K."/>
            <person name="Silva D."/>
            <person name="Sinclair B."/>
            <person name="Sperling S."/>
            <person name="Stupka E."/>
            <person name="Sugiura K."/>
            <person name="Sultana R."/>
            <person name="Takenaka Y."/>
            <person name="Taki K."/>
            <person name="Tammoja K."/>
            <person name="Tan S.L."/>
            <person name="Tang S."/>
            <person name="Taylor M.S."/>
            <person name="Tegner J."/>
            <person name="Teichmann S.A."/>
            <person name="Ueda H.R."/>
            <person name="van Nimwegen E."/>
            <person name="Verardo R."/>
            <person name="Wei C.L."/>
            <person name="Yagi K."/>
            <person name="Yamanishi H."/>
            <person name="Zabarovsky E."/>
            <person name="Zhu S."/>
            <person name="Zimmer A."/>
            <person name="Hide W."/>
            <person name="Bult C."/>
            <person name="Grimmond S.M."/>
            <person name="Teasdale R.D."/>
            <person name="Liu E.T."/>
            <person name="Brusic V."/>
            <person name="Quackenbush J."/>
            <person name="Wahlestedt C."/>
            <person name="Mattick J.S."/>
            <person name="Hume D.A."/>
            <person name="Kai C."/>
            <person name="Sasaki D."/>
            <person name="Tomaru Y."/>
            <person name="Fukuda S."/>
            <person name="Kanamori-Katayama M."/>
            <person name="Suzuki M."/>
            <person name="Aoki J."/>
            <person name="Arakawa T."/>
            <person name="Iida J."/>
            <person name="Imamura K."/>
            <person name="Itoh M."/>
            <person name="Kato T."/>
            <person name="Kawaji H."/>
            <person name="Kawagashira N."/>
            <person name="Kawashima T."/>
            <person name="Kojima M."/>
            <person name="Kondo S."/>
            <person name="Konno H."/>
            <person name="Nakano K."/>
            <person name="Ninomiya N."/>
            <person name="Nishio T."/>
            <person name="Okada M."/>
            <person name="Plessy C."/>
            <person name="Shibata K."/>
            <person name="Shiraki T."/>
            <person name="Suzuki S."/>
            <person name="Tagami M."/>
            <person name="Waki K."/>
            <person name="Watahiki A."/>
            <person name="Okamura-Oho Y."/>
            <person name="Suzuki H."/>
            <person name="Kawai J."/>
            <person name="Hayashizaki Y."/>
        </authorList>
    </citation>
    <scope>NUCLEOTIDE SEQUENCE [LARGE SCALE MRNA] (ISOFORM 2)</scope>
    <source>
        <strain>C57BL/6J</strain>
        <tissue>Embryo</tissue>
    </source>
</reference>
<reference key="3">
    <citation type="journal article" date="2014" name="J. Mol. Biol.">
        <title>Constitutive nuclear localization of an alternatively spliced sirtuin-2 isoform.</title>
        <authorList>
            <person name="Rack J.G."/>
            <person name="Vanlinden M.R."/>
            <person name="Lutter T."/>
            <person name="Aasland R."/>
            <person name="Ziegler M."/>
        </authorList>
    </citation>
    <scope>NUCLEOTIDE SEQUENCE [MRNA] (ISOFORM 3)</scope>
    <scope>ALTERNATIVE SPLICING (ISOFORMS 1 AND 2)</scope>
    <source>
        <tissue>Brain</tissue>
    </source>
</reference>
<reference key="4">
    <citation type="journal article" date="2009" name="PLoS Biol.">
        <title>Lineage-specific biology revealed by a finished genome assembly of the mouse.</title>
        <authorList>
            <person name="Church D.M."/>
            <person name="Goodstadt L."/>
            <person name="Hillier L.W."/>
            <person name="Zody M.C."/>
            <person name="Goldstein S."/>
            <person name="She X."/>
            <person name="Bult C.J."/>
            <person name="Agarwala R."/>
            <person name="Cherry J.L."/>
            <person name="DiCuccio M."/>
            <person name="Hlavina W."/>
            <person name="Kapustin Y."/>
            <person name="Meric P."/>
            <person name="Maglott D."/>
            <person name="Birtle Z."/>
            <person name="Marques A.C."/>
            <person name="Graves T."/>
            <person name="Zhou S."/>
            <person name="Teague B."/>
            <person name="Potamousis K."/>
            <person name="Churas C."/>
            <person name="Place M."/>
            <person name="Herschleb J."/>
            <person name="Runnheim R."/>
            <person name="Forrest D."/>
            <person name="Amos-Landgraf J."/>
            <person name="Schwartz D.C."/>
            <person name="Cheng Z."/>
            <person name="Lindblad-Toh K."/>
            <person name="Eichler E.E."/>
            <person name="Ponting C.P."/>
        </authorList>
    </citation>
    <scope>NUCLEOTIDE SEQUENCE [LARGE SCALE GENOMIC DNA]</scope>
    <source>
        <strain>C57BL/6J</strain>
    </source>
</reference>
<reference key="5">
    <citation type="journal article" date="2004" name="Genome Res.">
        <title>The status, quality, and expansion of the NIH full-length cDNA project: the Mammalian Gene Collection (MGC).</title>
        <authorList>
            <consortium name="The MGC Project Team"/>
        </authorList>
    </citation>
    <scope>NUCLEOTIDE SEQUENCE [LARGE SCALE MRNA] (ISOFORM 1)</scope>
    <source>
        <tissue>Mammary tumor</tissue>
    </source>
</reference>
<reference key="6">
    <citation type="submission" date="2009-01" db="UniProtKB">
        <authorList>
            <person name="Lubec G."/>
            <person name="Klug S."/>
            <person name="Kang S.U."/>
            <person name="Sunyer B."/>
            <person name="Chen W.-Q."/>
        </authorList>
    </citation>
    <scope>PROTEIN SEQUENCE OF 43-55; 58-69; 79-125; 137-153; 164-174; 213-253; 276-282 AND 348-371</scope>
    <scope>IDENTIFICATION BY MASS SPECTROMETRY</scope>
    <source>
        <strain>C57BL/6J</strain>
        <strain>OF1</strain>
        <tissue>Brain</tissue>
        <tissue>Hippocampus</tissue>
    </source>
</reference>
<reference key="7">
    <citation type="journal article" date="2004" name="Mol. Cell. Proteomics">
        <title>Phosphoproteomic analysis of the developing mouse brain.</title>
        <authorList>
            <person name="Ballif B.A."/>
            <person name="Villen J."/>
            <person name="Beausoleil S.A."/>
            <person name="Schwartz D."/>
            <person name="Gygi S.P."/>
        </authorList>
    </citation>
    <scope>IDENTIFICATION BY MASS SPECTROMETRY [LARGE SCALE ANALYSIS]</scope>
    <source>
        <tissue>Embryonic brain</tissue>
    </source>
</reference>
<reference key="8">
    <citation type="journal article" date="2007" name="Aging Cell">
        <title>SIRT2 deacetylates FOXO3a in response to oxidative stress and caloric restriction.</title>
        <authorList>
            <person name="Wang F."/>
            <person name="Nguyen M."/>
            <person name="Qin F.X."/>
            <person name="Tong Q."/>
        </authorList>
    </citation>
    <scope>FUNCTION IN DEACETYLATION OF FOXO3</scope>
    <scope>CATALYTIC ACTIVITY</scope>
    <scope>FUNCTION IN REGULATION OF FOXO3 ACTIVITY</scope>
    <scope>INTERACTION WITH FOXO3</scope>
    <scope>SUBCELLULAR LOCATION</scope>
    <scope>MUTAGENESIS OF HIS-187</scope>
    <scope>INDUCTION BY CALORIC RESTRICTION AND OXIDATIVE STRESS</scope>
</reference>
<reference key="9">
    <citation type="journal article" date="2007" name="Cell Metab.">
        <title>SIRT2 regulates adipocyte differentiation through FoxO1 acetylation/deacetylation.</title>
        <authorList>
            <person name="Jing E."/>
            <person name="Gesta S."/>
            <person name="Kahn C.R."/>
        </authorList>
    </citation>
    <scope>FUNCTION IN DEACETYLATION OF FOXO1</scope>
    <scope>CATALYTIC ACTIVITY</scope>
    <scope>FUNCTION IN INHIBITION OF ADIPOCYTE DIFFERENTIATION</scope>
    <scope>INTERACTION WITH FOXO1</scope>
    <scope>INDUCTION</scope>
    <scope>TISSUE SPECIFICITY</scope>
</reference>
<reference key="10">
    <citation type="journal article" date="2007" name="J. Neurosci.">
        <title>Proteolipid protein is required for transport of sirtuin 2 into CNS myelin.</title>
        <authorList>
            <person name="Werner H.B."/>
            <person name="Kuhlmann K."/>
            <person name="Shen S."/>
            <person name="Uecker M."/>
            <person name="Schardt A."/>
            <person name="Dimova K."/>
            <person name="Orfaniotou F."/>
            <person name="Dhaunchak A."/>
            <person name="Brinkmann B.G."/>
            <person name="Mobius W."/>
            <person name="Guarente L."/>
            <person name="Casaccia-Bonnefil P."/>
            <person name="Jahn O."/>
            <person name="Nave K.A."/>
        </authorList>
    </citation>
    <scope>SUBCELLULAR LOCATION</scope>
    <scope>TISSUE SPECIFICITY</scope>
</reference>
<reference key="11">
    <citation type="journal article" date="2007" name="Neurochem. Res.">
        <title>Microtubule deacetylases, SirT2 and HDAC6, in the nervous system.</title>
        <authorList>
            <person name="Southwood C.M."/>
            <person name="Peppi M."/>
            <person name="Dryden S."/>
            <person name="Tainsky M.A."/>
            <person name="Gow A."/>
        </authorList>
    </citation>
    <scope>SUBCELLULAR LOCATION</scope>
    <scope>TISSUE SPECIFICITY</scope>
</reference>
<reference key="12">
    <citation type="journal article" date="2007" name="Neuroscience">
        <title>Mammalian Sir2-related protein (SIRT) 2-mediated modulation of resistance to axonal degeneration in slow Wallerian degeneration mice: a crucial role of tubulin deacetylation.</title>
        <authorList>
            <person name="Suzuki K."/>
            <person name="Koike T."/>
        </authorList>
    </citation>
    <scope>FUNCTION IN DEACETYLATION OF TUBULIN</scope>
    <scope>CATALYTIC ACTIVITY</scope>
    <scope>FUNCTION IN AXONAL DEGENERATION</scope>
    <scope>SUBCELLULAR LOCATION</scope>
</reference>
<reference key="13">
    <citation type="journal article" date="2007" name="Proc. Natl. Acad. Sci. U.S.A.">
        <title>Large-scale phosphorylation analysis of mouse liver.</title>
        <authorList>
            <person name="Villen J."/>
            <person name="Beausoleil S.A."/>
            <person name="Gerber S.A."/>
            <person name="Gygi S.P."/>
        </authorList>
    </citation>
    <scope>IDENTIFICATION BY MASS SPECTROMETRY [LARGE SCALE ANALYSIS]</scope>
    <source>
        <tissue>Liver</tissue>
    </source>
</reference>
<reference key="14">
    <citation type="journal article" date="2008" name="J. Cell Biol.">
        <title>The regulation of SIRT2 function by cyclin-dependent kinases affects cell motility.</title>
        <authorList>
            <person name="Pandithage R."/>
            <person name="Lilischkis R."/>
            <person name="Harting K."/>
            <person name="Wolf A."/>
            <person name="Jedamzik B."/>
            <person name="Luscher-Firzlaff J."/>
            <person name="Vervoorts J."/>
            <person name="Lasonder E."/>
            <person name="Kremmer E."/>
            <person name="Knoll B."/>
            <person name="Luscher B."/>
        </authorList>
    </citation>
    <scope>INTERACTION WITH CDK5</scope>
    <scope>SUBCELLULAR LOCATION</scope>
    <scope>TISSUE SPECIFICITY</scope>
</reference>
<reference key="15">
    <citation type="journal article" date="2009" name="Immunity">
        <title>The phagosomal proteome in interferon-gamma-activated macrophages.</title>
        <authorList>
            <person name="Trost M."/>
            <person name="English L."/>
            <person name="Lemieux S."/>
            <person name="Courcelles M."/>
            <person name="Desjardins M."/>
            <person name="Thibault P."/>
        </authorList>
    </citation>
    <scope>IDENTIFICATION BY MASS SPECTROMETRY [LARGE SCALE ANALYSIS]</scope>
</reference>
<reference key="16">
    <citation type="journal article" date="2009" name="Mol. Biol. Cell">
        <title>SIRT2 suppresses adipocyte differentiation by deacetylating FOXO1 and enhancing FOXO1's repressive interaction with PPARgamma.</title>
        <authorList>
            <person name="Wang F."/>
            <person name="Tong Q."/>
        </authorList>
    </citation>
    <scope>FUNCTION IN DEACETYLATION OF FOXO1</scope>
    <scope>FUNCTION IN INHIBITION OF ADIPOCYTE DIFFERENTIATION</scope>
    <scope>INTERACTION WITH FOXO1</scope>
    <scope>SUBCELLULAR LOCATION</scope>
    <scope>INDUCTION BY CALORIC RESTRICTION</scope>
</reference>
<reference key="17">
    <citation type="journal article" date="2010" name="Cell">
        <title>A tissue-specific atlas of mouse protein phosphorylation and expression.</title>
        <authorList>
            <person name="Huttlin E.L."/>
            <person name="Jedrychowski M.P."/>
            <person name="Elias J.E."/>
            <person name="Goswami T."/>
            <person name="Rad R."/>
            <person name="Beausoleil S.A."/>
            <person name="Villen J."/>
            <person name="Haas W."/>
            <person name="Sowa M.E."/>
            <person name="Gygi S.P."/>
        </authorList>
    </citation>
    <scope>PHOSPHORYLATION [LARGE SCALE ANALYSIS] AT SER-23; SER-25; THR-27; SER-368 AND SER-372</scope>
    <scope>IDENTIFICATION BY MASS SPECTROMETRY [LARGE SCALE ANALYSIS]</scope>
    <source>
        <tissue>Brain</tissue>
        <tissue>Brown adipose tissue</tissue>
        <tissue>Heart</tissue>
        <tissue>Kidney</tissue>
        <tissue>Liver</tissue>
        <tissue>Lung</tissue>
        <tissue>Pancreas</tissue>
        <tissue>Spleen</tissue>
        <tissue>Testis</tissue>
    </source>
</reference>
<reference key="18">
    <citation type="journal article" date="2011" name="Cancer Cell">
        <title>SIRT2 maintains genome integrity and suppresses tumorigenesis through regulating APC/C activity.</title>
        <authorList>
            <person name="Kim H.S."/>
            <person name="Vassilopoulos A."/>
            <person name="Wang R.H."/>
            <person name="Lahusen T."/>
            <person name="Xiao Z."/>
            <person name="Xu X."/>
            <person name="Li C."/>
            <person name="Veenstra T.D."/>
            <person name="Li B."/>
            <person name="Yu H."/>
            <person name="Ji J."/>
            <person name="Wang X.W."/>
            <person name="Park S.H."/>
            <person name="Cha Y.I."/>
            <person name="Gius D."/>
            <person name="Deng C.X."/>
        </authorList>
    </citation>
    <scope>FUNCTION IN DEACETYLATION OF CDC20 AND FZR1</scope>
    <scope>POSSIBLE FUNCTION AS A TUMOR SUPPRESSOR</scope>
    <scope>INTERACTION WITH AURKA; CDC20 AND FZR1</scope>
    <scope>DISRUPTION PHENOTYPE</scope>
    <scope>SUBCELLULAR LOCATION</scope>
</reference>
<reference key="19">
    <citation type="journal article" date="2011" name="Hum. Mol. Genet.">
        <title>The Sirtuin 2 microtubule deacetylase is an abundant neuronal protein that accumulates in the aging CNS.</title>
        <authorList>
            <person name="Maxwell M.M."/>
            <person name="Tomkinson E.M."/>
            <person name="Nobles J."/>
            <person name="Wizeman J.W."/>
            <person name="Amore A.M."/>
            <person name="Quinti L."/>
            <person name="Chopra V."/>
            <person name="Hersch S.M."/>
            <person name="Kazantsev A.G."/>
        </authorList>
    </citation>
    <scope>ALTERNATIVE SPLICING (ISOFORMS 1; 2 AND 4)</scope>
    <scope>FUNCTION IN DEACETYLATION OF ALPHA-TUBULIN (ISOFORMS 1; 2 AND 4)</scope>
    <scope>ASSOCIATION WITH ALPHA-TUBULIN (ISOFORMS 2 AND 4)</scope>
    <scope>SUBCELLULAR LOCATION</scope>
    <scope>TISSUE SPECIFICITY</scope>
    <scope>INDUCTION</scope>
</reference>
<reference key="20">
    <citation type="journal article" date="2011" name="Proc. Natl. Acad. Sci. U.S.A.">
        <title>Sir-two-homolog 2 (Sirt2) modulates peripheral myelination through polarity protein Par-3/atypical protein kinase C (aPKC) signaling.</title>
        <authorList>
            <person name="Beirowski B."/>
            <person name="Gustin J."/>
            <person name="Armour S.M."/>
            <person name="Yamamoto H."/>
            <person name="Viader A."/>
            <person name="North B.J."/>
            <person name="Michan S."/>
            <person name="Baloh R.H."/>
            <person name="Golden J.P."/>
            <person name="Schmidt R.E."/>
            <person name="Sinclair D.A."/>
            <person name="Auwerx J."/>
            <person name="Milbrandt J."/>
        </authorList>
    </citation>
    <scope>FUNCTION IN REGULATION OF PERIPHERAL MYELINATION</scope>
    <scope>CONDITIONAL KNOCKOUT IN SCHWANN CELL</scope>
    <scope>TISSUE SPECIFICITY</scope>
    <scope>INDUCTION</scope>
</reference>
<reference key="21">
    <citation type="journal article" date="2012" name="Oncogene">
        <title>Deacetylation of FOXO3 by SIRT1 or SIRT2 leads to Skp2-mediated FOXO3 ubiquitination and degradation.</title>
        <authorList>
            <person name="Wang F."/>
            <person name="Chan C.H."/>
            <person name="Chen K."/>
            <person name="Guan X."/>
            <person name="Lin H.K."/>
            <person name="Tong Q."/>
        </authorList>
    </citation>
    <scope>FUNCTION IN DEACETYLATION OF FOXO3</scope>
    <scope>CATALYTIC ACTIVITY</scope>
    <scope>FUNCTION IN REGULATION OF FOXO3 ACTIVITY</scope>
    <scope>MUTAGENESIS OF HIS-187</scope>
</reference>
<reference key="22">
    <citation type="journal article" date="2012" name="Transl. Cancer Res.">
        <title>SIRT2 is a tumor suppressor that connects aging, acetylome, cell cycle signaling, and carcinogenesis.</title>
        <authorList>
            <person name="Park S.H."/>
            <person name="Zhu Y."/>
            <person name="Ozden O."/>
            <person name="Kim H.S."/>
            <person name="Jiang H."/>
            <person name="Deng C.X."/>
            <person name="Gius D."/>
            <person name="Vassilopoulos A."/>
        </authorList>
    </citation>
    <scope>REVIEW</scope>
    <scope>FUNCTION AS A TUMOR SUPPRESSOR</scope>
</reference>
<reference key="23">
    <citation type="journal article" date="2013" name="Genes Dev.">
        <title>The tumor suppressor SirT2 regulates cell cycle progression and genome stability by modulating the mitotic deposition of H4K20 methylation.</title>
        <authorList>
            <person name="Serrano L."/>
            <person name="Martinez-Redondo P."/>
            <person name="Marazuela-Duque A."/>
            <person name="Vazquez B.N."/>
            <person name="Dooley S.J."/>
            <person name="Voigt P."/>
            <person name="Beck D.B."/>
            <person name="Kane-Goldsmith N."/>
            <person name="Tong Q."/>
            <person name="Rabanal R.M."/>
            <person name="Fondevila D."/>
            <person name="Munoz P."/>
            <person name="Kruger M."/>
            <person name="Tischfield J.A."/>
            <person name="Vaquero A."/>
        </authorList>
    </citation>
    <scope>FUNCTION AS A TUMOR SUPPRESSOR</scope>
    <scope>DISRUPTION PHENOTYPE</scope>
    <scope>SUBCELLULAR LOCATION</scope>
</reference>
<reference key="24">
    <citation type="journal article" date="2014" name="Acta Oto-Laryngol.">
        <title>Localization of sirtuins in the mouse inner ear.</title>
        <authorList>
            <person name="Takumida M."/>
            <person name="Takumida H."/>
            <person name="Anniko M."/>
        </authorList>
    </citation>
    <scope>SUBCELLULAR LOCATION</scope>
    <scope>TISSUE SPECIFICITY</scope>
</reference>
<reference key="25">
    <citation type="journal article" date="2014" name="FASEB J.">
        <title>Sirt2 functions in spindle organization and chromosome alignment in mouse oocyte meiosis.</title>
        <authorList>
            <person name="Zhang L."/>
            <person name="Hou X."/>
            <person name="Ma R."/>
            <person name="Moley K."/>
            <person name="Schedl T."/>
            <person name="Wang Q."/>
        </authorList>
    </citation>
    <scope>FUNCTION IN DEACETYLATION OF HISTONE H4 AND ALPHA-TUBULIN</scope>
    <scope>FUNCTION IN OOCYTE MEIOSIS</scope>
    <scope>SUBCELLULAR LOCATION</scope>
    <scope>TISSUE SPECIFICITY</scope>
</reference>
<reference key="26">
    <citation type="journal article" date="2021" name="Nat. Commun.">
        <title>Acetylation of PAX7 controls muscle stem cell self-renewal and differentiation potential in mice.</title>
        <authorList>
            <person name="Sincennes M.C."/>
            <person name="Brun C.E."/>
            <person name="Lin A.Y.T."/>
            <person name="Rosembert T."/>
            <person name="Datzkiw D."/>
            <person name="Saber J."/>
            <person name="Ming H."/>
            <person name="Kawabe Y.I."/>
            <person name="Rudnicki M.A."/>
        </authorList>
    </citation>
    <scope>FUNCTION</scope>
    <scope>CATALYTIC ACTIVITY</scope>
</reference>
<dbReference type="EC" id="2.3.1.286" evidence="4 8 9 11 15 21"/>
<dbReference type="EC" id="2.3.1.-" evidence="3"/>
<dbReference type="EMBL" id="AF299337">
    <property type="protein sequence ID" value="AAG39256.1"/>
    <property type="molecule type" value="mRNA"/>
</dbReference>
<dbReference type="EMBL" id="AF302272">
    <property type="protein sequence ID" value="AAG32038.1"/>
    <property type="molecule type" value="Genomic_DNA"/>
</dbReference>
<dbReference type="EMBL" id="AF302265">
    <property type="protein sequence ID" value="AAG32038.1"/>
    <property type="status" value="JOINED"/>
    <property type="molecule type" value="Genomic_DNA"/>
</dbReference>
<dbReference type="EMBL" id="AF302266">
    <property type="protein sequence ID" value="AAG32038.1"/>
    <property type="status" value="JOINED"/>
    <property type="molecule type" value="Genomic_DNA"/>
</dbReference>
<dbReference type="EMBL" id="AF302267">
    <property type="protein sequence ID" value="AAG32038.1"/>
    <property type="status" value="JOINED"/>
    <property type="molecule type" value="Genomic_DNA"/>
</dbReference>
<dbReference type="EMBL" id="AF302268">
    <property type="protein sequence ID" value="AAG32038.1"/>
    <property type="status" value="JOINED"/>
    <property type="molecule type" value="Genomic_DNA"/>
</dbReference>
<dbReference type="EMBL" id="AF302269">
    <property type="protein sequence ID" value="AAG32038.1"/>
    <property type="status" value="JOINED"/>
    <property type="molecule type" value="Genomic_DNA"/>
</dbReference>
<dbReference type="EMBL" id="AF302270">
    <property type="protein sequence ID" value="AAG32038.1"/>
    <property type="status" value="JOINED"/>
    <property type="molecule type" value="Genomic_DNA"/>
</dbReference>
<dbReference type="EMBL" id="AF302271">
    <property type="protein sequence ID" value="AAG32038.1"/>
    <property type="status" value="JOINED"/>
    <property type="molecule type" value="Genomic_DNA"/>
</dbReference>
<dbReference type="EMBL" id="AK014042">
    <property type="protein sequence ID" value="BAB29128.1"/>
    <property type="molecule type" value="mRNA"/>
</dbReference>
<dbReference type="EMBL" id="KF032392">
    <property type="protein sequence ID" value="AGZ02590.1"/>
    <property type="molecule type" value="mRNA"/>
</dbReference>
<dbReference type="EMBL" id="AC171210">
    <property type="status" value="NOT_ANNOTATED_CDS"/>
    <property type="molecule type" value="Genomic_DNA"/>
</dbReference>
<dbReference type="EMBL" id="BC021439">
    <property type="protein sequence ID" value="AAH21439.1"/>
    <property type="molecule type" value="mRNA"/>
</dbReference>
<dbReference type="CCDS" id="CCDS21055.1">
    <molecule id="Q8VDQ8-1"/>
</dbReference>
<dbReference type="CCDS" id="CCDS52165.1">
    <molecule id="Q8VDQ8-4"/>
</dbReference>
<dbReference type="CCDS" id="CCDS85253.1">
    <molecule id="Q8VDQ8-2"/>
</dbReference>
<dbReference type="RefSeq" id="NP_001116237.1">
    <molecule id="Q8VDQ8-2"/>
    <property type="nucleotide sequence ID" value="NM_001122765.2"/>
</dbReference>
<dbReference type="RefSeq" id="NP_001116238.1">
    <molecule id="Q8VDQ8-4"/>
    <property type="nucleotide sequence ID" value="NM_001122766.2"/>
</dbReference>
<dbReference type="RefSeq" id="NP_071877.3">
    <molecule id="Q8VDQ8-1"/>
    <property type="nucleotide sequence ID" value="NM_022432.4"/>
</dbReference>
<dbReference type="RefSeq" id="XP_036009218.1">
    <molecule id="Q8VDQ8-2"/>
    <property type="nucleotide sequence ID" value="XM_036153325.1"/>
</dbReference>
<dbReference type="SMR" id="Q8VDQ8"/>
<dbReference type="BioGRID" id="211070">
    <property type="interactions" value="27"/>
</dbReference>
<dbReference type="FunCoup" id="Q8VDQ8">
    <property type="interactions" value="1303"/>
</dbReference>
<dbReference type="IntAct" id="Q8VDQ8">
    <property type="interactions" value="19"/>
</dbReference>
<dbReference type="STRING" id="10090.ENSMUSP00000072732"/>
<dbReference type="ChEMBL" id="CHEMBL3232691"/>
<dbReference type="GlyGen" id="Q8VDQ8">
    <property type="glycosylation" value="2 sites, 1 N-linked glycan (1 site), 1 O-linked glycan (1 site)"/>
</dbReference>
<dbReference type="iPTMnet" id="Q8VDQ8"/>
<dbReference type="PhosphoSitePlus" id="Q8VDQ8"/>
<dbReference type="SwissPalm" id="Q8VDQ8"/>
<dbReference type="jPOST" id="Q8VDQ8"/>
<dbReference type="PaxDb" id="10090-ENSMUSP00000072732"/>
<dbReference type="PeptideAtlas" id="Q8VDQ8"/>
<dbReference type="ProteomicsDB" id="257014">
    <molecule id="Q8VDQ8-1"/>
</dbReference>
<dbReference type="ProteomicsDB" id="257015">
    <molecule id="Q8VDQ8-2"/>
</dbReference>
<dbReference type="ProteomicsDB" id="257016">
    <molecule id="Q8VDQ8-3"/>
</dbReference>
<dbReference type="ProteomicsDB" id="257017">
    <molecule id="Q8VDQ8-4"/>
</dbReference>
<dbReference type="Pumba" id="Q8VDQ8"/>
<dbReference type="Antibodypedia" id="2167">
    <property type="antibodies" value="590 antibodies from 47 providers"/>
</dbReference>
<dbReference type="DNASU" id="64383"/>
<dbReference type="Ensembl" id="ENSMUST00000072965.5">
    <molecule id="Q8VDQ8-1"/>
    <property type="protein sequence ID" value="ENSMUSP00000072732.5"/>
    <property type="gene ID" value="ENSMUSG00000015149.15"/>
</dbReference>
<dbReference type="Ensembl" id="ENSMUST00000122915.8">
    <molecule id="Q8VDQ8-2"/>
    <property type="protein sequence ID" value="ENSMUSP00000147217.2"/>
    <property type="gene ID" value="ENSMUSG00000015149.15"/>
</dbReference>
<dbReference type="Ensembl" id="ENSMUST00000170068.9">
    <molecule id="Q8VDQ8-4"/>
    <property type="protein sequence ID" value="ENSMUSP00000132783.2"/>
    <property type="gene ID" value="ENSMUSG00000015149.15"/>
</dbReference>
<dbReference type="GeneID" id="64383"/>
<dbReference type="KEGG" id="mmu:64383"/>
<dbReference type="UCSC" id="uc009fzt.2">
    <molecule id="Q8VDQ8-1"/>
    <property type="organism name" value="mouse"/>
</dbReference>
<dbReference type="UCSC" id="uc012fgx.1">
    <molecule id="Q8VDQ8-4"/>
    <property type="organism name" value="mouse"/>
</dbReference>
<dbReference type="AGR" id="MGI:1927664"/>
<dbReference type="CTD" id="22933"/>
<dbReference type="MGI" id="MGI:1927664">
    <property type="gene designation" value="Sirt2"/>
</dbReference>
<dbReference type="VEuPathDB" id="HostDB:ENSMUSG00000015149"/>
<dbReference type="eggNOG" id="KOG2682">
    <property type="taxonomic scope" value="Eukaryota"/>
</dbReference>
<dbReference type="GeneTree" id="ENSGT00940000157514"/>
<dbReference type="HOGENOM" id="CLU_023643_7_4_1"/>
<dbReference type="InParanoid" id="Q8VDQ8"/>
<dbReference type="OMA" id="ATHSCID"/>
<dbReference type="OrthoDB" id="420264at2759"/>
<dbReference type="PhylomeDB" id="Q8VDQ8"/>
<dbReference type="TreeFam" id="TF106181"/>
<dbReference type="Reactome" id="R-MMU-2995383">
    <property type="pathway name" value="Initiation of Nuclear Envelope (NE) Reformation"/>
</dbReference>
<dbReference type="BioGRID-ORCS" id="64383">
    <property type="hits" value="4 hits in 81 CRISPR screens"/>
</dbReference>
<dbReference type="ChiTaRS" id="Sirt2">
    <property type="organism name" value="mouse"/>
</dbReference>
<dbReference type="PRO" id="PR:Q8VDQ8"/>
<dbReference type="Proteomes" id="UP000000589">
    <property type="component" value="Chromosome 7"/>
</dbReference>
<dbReference type="RNAct" id="Q8VDQ8">
    <property type="molecule type" value="protein"/>
</dbReference>
<dbReference type="Bgee" id="ENSMUSG00000015149">
    <property type="expression patterns" value="Expressed in cranial nerve II and 265 other cell types or tissues"/>
</dbReference>
<dbReference type="ExpressionAtlas" id="Q8VDQ8">
    <property type="expression patterns" value="baseline and differential"/>
</dbReference>
<dbReference type="GO" id="GO:0005814">
    <property type="term" value="C:centriole"/>
    <property type="evidence" value="ECO:0000250"/>
    <property type="project" value="UniProtKB"/>
</dbReference>
<dbReference type="GO" id="GO:0005813">
    <property type="term" value="C:centrosome"/>
    <property type="evidence" value="ECO:0000250"/>
    <property type="project" value="UniProtKB"/>
</dbReference>
<dbReference type="GO" id="GO:0005694">
    <property type="term" value="C:chromosome"/>
    <property type="evidence" value="ECO:0000250"/>
    <property type="project" value="UniProtKB"/>
</dbReference>
<dbReference type="GO" id="GO:0005737">
    <property type="term" value="C:cytoplasm"/>
    <property type="evidence" value="ECO:0000314"/>
    <property type="project" value="UniProtKB"/>
</dbReference>
<dbReference type="GO" id="GO:0005829">
    <property type="term" value="C:cytosol"/>
    <property type="evidence" value="ECO:0000250"/>
    <property type="project" value="UniProtKB"/>
</dbReference>
<dbReference type="GO" id="GO:0097386">
    <property type="term" value="C:glial cell projection"/>
    <property type="evidence" value="ECO:0000250"/>
    <property type="project" value="UniProtKB"/>
</dbReference>
<dbReference type="GO" id="GO:0030426">
    <property type="term" value="C:growth cone"/>
    <property type="evidence" value="ECO:0007669"/>
    <property type="project" value="UniProtKB-SubCell"/>
</dbReference>
<dbReference type="GO" id="GO:0000792">
    <property type="term" value="C:heterochromatin"/>
    <property type="evidence" value="ECO:0000250"/>
    <property type="project" value="UniProtKB"/>
</dbReference>
<dbReference type="GO" id="GO:0044224">
    <property type="term" value="C:juxtaparanode region of axon"/>
    <property type="evidence" value="ECO:0000250"/>
    <property type="project" value="UniProtKB"/>
</dbReference>
<dbReference type="GO" id="GO:0043219">
    <property type="term" value="C:lateral loop"/>
    <property type="evidence" value="ECO:0000250"/>
    <property type="project" value="UniProtKB"/>
</dbReference>
<dbReference type="GO" id="GO:0072687">
    <property type="term" value="C:meiotic spindle"/>
    <property type="evidence" value="ECO:0000314"/>
    <property type="project" value="UniProtKB"/>
</dbReference>
<dbReference type="GO" id="GO:0005874">
    <property type="term" value="C:microtubule"/>
    <property type="evidence" value="ECO:0000250"/>
    <property type="project" value="UniProtKB"/>
</dbReference>
<dbReference type="GO" id="GO:0030496">
    <property type="term" value="C:midbody"/>
    <property type="evidence" value="ECO:0000314"/>
    <property type="project" value="UniProtKB"/>
</dbReference>
<dbReference type="GO" id="GO:0005739">
    <property type="term" value="C:mitochondrion"/>
    <property type="evidence" value="ECO:0000314"/>
    <property type="project" value="MGI"/>
</dbReference>
<dbReference type="GO" id="GO:0072686">
    <property type="term" value="C:mitotic spindle"/>
    <property type="evidence" value="ECO:0000250"/>
    <property type="project" value="UniProtKB"/>
</dbReference>
<dbReference type="GO" id="GO:0043209">
    <property type="term" value="C:myelin sheath"/>
    <property type="evidence" value="ECO:0000314"/>
    <property type="project" value="UniProtKB"/>
</dbReference>
<dbReference type="GO" id="GO:0005730">
    <property type="term" value="C:nucleolus"/>
    <property type="evidence" value="ECO:0007669"/>
    <property type="project" value="Ensembl"/>
</dbReference>
<dbReference type="GO" id="GO:0005634">
    <property type="term" value="C:nucleus"/>
    <property type="evidence" value="ECO:0000314"/>
    <property type="project" value="UniProtKB"/>
</dbReference>
<dbReference type="GO" id="GO:0033010">
    <property type="term" value="C:paranodal junction"/>
    <property type="evidence" value="ECO:0000314"/>
    <property type="project" value="UniProtKB"/>
</dbReference>
<dbReference type="GO" id="GO:0033270">
    <property type="term" value="C:paranode region of axon"/>
    <property type="evidence" value="ECO:0000250"/>
    <property type="project" value="UniProtKB"/>
</dbReference>
<dbReference type="GO" id="GO:0043204">
    <property type="term" value="C:perikaryon"/>
    <property type="evidence" value="ECO:0000314"/>
    <property type="project" value="UniProtKB"/>
</dbReference>
<dbReference type="GO" id="GO:0048471">
    <property type="term" value="C:perinuclear region of cytoplasm"/>
    <property type="evidence" value="ECO:0000314"/>
    <property type="project" value="UniProtKB"/>
</dbReference>
<dbReference type="GO" id="GO:0005886">
    <property type="term" value="C:plasma membrane"/>
    <property type="evidence" value="ECO:0007669"/>
    <property type="project" value="UniProtKB-KW"/>
</dbReference>
<dbReference type="GO" id="GO:0043220">
    <property type="term" value="C:Schmidt-Lanterman incisure"/>
    <property type="evidence" value="ECO:0000314"/>
    <property type="project" value="UniProtKB"/>
</dbReference>
<dbReference type="GO" id="GO:0005819">
    <property type="term" value="C:spindle"/>
    <property type="evidence" value="ECO:0000250"/>
    <property type="project" value="UniProtKB"/>
</dbReference>
<dbReference type="GO" id="GO:0003682">
    <property type="term" value="F:chromatin binding"/>
    <property type="evidence" value="ECO:0000250"/>
    <property type="project" value="UniProtKB"/>
</dbReference>
<dbReference type="GO" id="GO:0140297">
    <property type="term" value="F:DNA-binding transcription factor binding"/>
    <property type="evidence" value="ECO:0000250"/>
    <property type="project" value="UniProtKB"/>
</dbReference>
<dbReference type="GO" id="GO:0035035">
    <property type="term" value="F:histone acetyltransferase binding"/>
    <property type="evidence" value="ECO:0000250"/>
    <property type="project" value="UniProtKB"/>
</dbReference>
<dbReference type="GO" id="GO:0004407">
    <property type="term" value="F:histone deacetylase activity"/>
    <property type="evidence" value="ECO:0000315"/>
    <property type="project" value="UniProtKB"/>
</dbReference>
<dbReference type="GO" id="GO:0017136">
    <property type="term" value="F:histone deacetylase activity, NAD-dependent"/>
    <property type="evidence" value="ECO:0000250"/>
    <property type="project" value="UniProtKB"/>
</dbReference>
<dbReference type="GO" id="GO:0042826">
    <property type="term" value="F:histone deacetylase binding"/>
    <property type="evidence" value="ECO:0000250"/>
    <property type="project" value="UniProtKB"/>
</dbReference>
<dbReference type="GO" id="GO:0046970">
    <property type="term" value="F:histone H4K16 deacetylase activity, NAD-dependent"/>
    <property type="evidence" value="ECO:0000250"/>
    <property type="project" value="UniProtKB"/>
</dbReference>
<dbReference type="GO" id="GO:0070403">
    <property type="term" value="F:NAD+ binding"/>
    <property type="evidence" value="ECO:0007669"/>
    <property type="project" value="Ensembl"/>
</dbReference>
<dbReference type="GO" id="GO:0003950">
    <property type="term" value="F:NAD+ poly-ADP-ribosyltransferase activity"/>
    <property type="evidence" value="ECO:0007669"/>
    <property type="project" value="Ensembl"/>
</dbReference>
<dbReference type="GO" id="GO:0140773">
    <property type="term" value="F:NAD-dependent protein demyristoylase activity"/>
    <property type="evidence" value="ECO:0000250"/>
    <property type="project" value="UniProtKB"/>
</dbReference>
<dbReference type="GO" id="GO:0140774">
    <property type="term" value="F:NAD-dependent protein depalmitoylase activity"/>
    <property type="evidence" value="ECO:0000250"/>
    <property type="project" value="UniProtKB"/>
</dbReference>
<dbReference type="GO" id="GO:0034979">
    <property type="term" value="F:NAD-dependent protein lysine deacetylase activity"/>
    <property type="evidence" value="ECO:0000314"/>
    <property type="project" value="UniProtKB"/>
</dbReference>
<dbReference type="GO" id="GO:0033558">
    <property type="term" value="F:protein lysine deacetylase activity"/>
    <property type="evidence" value="ECO:0000314"/>
    <property type="project" value="UniProtKB"/>
</dbReference>
<dbReference type="GO" id="GO:0042903">
    <property type="term" value="F:tubulin deacetylase activity"/>
    <property type="evidence" value="ECO:0000315"/>
    <property type="project" value="UniProtKB"/>
</dbReference>
<dbReference type="GO" id="GO:0043130">
    <property type="term" value="F:ubiquitin binding"/>
    <property type="evidence" value="ECO:0000250"/>
    <property type="project" value="UniProtKB"/>
</dbReference>
<dbReference type="GO" id="GO:0008270">
    <property type="term" value="F:zinc ion binding"/>
    <property type="evidence" value="ECO:0007669"/>
    <property type="project" value="Ensembl"/>
</dbReference>
<dbReference type="GO" id="GO:0006914">
    <property type="term" value="P:autophagy"/>
    <property type="evidence" value="ECO:0007669"/>
    <property type="project" value="UniProtKB-KW"/>
</dbReference>
<dbReference type="GO" id="GO:0051301">
    <property type="term" value="P:cell division"/>
    <property type="evidence" value="ECO:0007669"/>
    <property type="project" value="UniProtKB-KW"/>
</dbReference>
<dbReference type="GO" id="GO:0061433">
    <property type="term" value="P:cellular response to caloric restriction"/>
    <property type="evidence" value="ECO:0000314"/>
    <property type="project" value="UniProtKB"/>
</dbReference>
<dbReference type="GO" id="GO:0071872">
    <property type="term" value="P:cellular response to epinephrine stimulus"/>
    <property type="evidence" value="ECO:0000314"/>
    <property type="project" value="UniProtKB"/>
</dbReference>
<dbReference type="GO" id="GO:0071456">
    <property type="term" value="P:cellular response to hypoxia"/>
    <property type="evidence" value="ECO:0000250"/>
    <property type="project" value="UniProtKB"/>
</dbReference>
<dbReference type="GO" id="GO:0034599">
    <property type="term" value="P:cellular response to oxidative stress"/>
    <property type="evidence" value="ECO:0000314"/>
    <property type="project" value="UniProtKB"/>
</dbReference>
<dbReference type="GO" id="GO:0006325">
    <property type="term" value="P:chromatin organization"/>
    <property type="evidence" value="ECO:0000316"/>
    <property type="project" value="MGI"/>
</dbReference>
<dbReference type="GO" id="GO:0040029">
    <property type="term" value="P:epigenetic regulation of gene expression"/>
    <property type="evidence" value="ECO:0000315"/>
    <property type="project" value="UniProtKB"/>
</dbReference>
<dbReference type="GO" id="GO:0016042">
    <property type="term" value="P:lipid catabolic process"/>
    <property type="evidence" value="ECO:0000315"/>
    <property type="project" value="UniProtKB"/>
</dbReference>
<dbReference type="GO" id="GO:0051321">
    <property type="term" value="P:meiotic cell cycle"/>
    <property type="evidence" value="ECO:0007669"/>
    <property type="project" value="UniProtKB-KW"/>
</dbReference>
<dbReference type="GO" id="GO:0022011">
    <property type="term" value="P:myelination in peripheral nervous system"/>
    <property type="evidence" value="ECO:0000315"/>
    <property type="project" value="UniProtKB"/>
</dbReference>
<dbReference type="GO" id="GO:0010507">
    <property type="term" value="P:negative regulation of autophagy"/>
    <property type="evidence" value="ECO:0000250"/>
    <property type="project" value="UniProtKB"/>
</dbReference>
<dbReference type="GO" id="GO:0045892">
    <property type="term" value="P:negative regulation of DNA-templated transcription"/>
    <property type="evidence" value="ECO:0000250"/>
    <property type="project" value="UniProtKB"/>
</dbReference>
<dbReference type="GO" id="GO:0045599">
    <property type="term" value="P:negative regulation of fat cell differentiation"/>
    <property type="evidence" value="ECO:0000315"/>
    <property type="project" value="UniProtKB"/>
</dbReference>
<dbReference type="GO" id="GO:1900226">
    <property type="term" value="P:negative regulation of NLRP3 inflammasome complex assembly"/>
    <property type="evidence" value="ECO:0000315"/>
    <property type="project" value="MGI"/>
</dbReference>
<dbReference type="GO" id="GO:0070446">
    <property type="term" value="P:negative regulation of oligodendrocyte progenitor proliferation"/>
    <property type="evidence" value="ECO:0000250"/>
    <property type="project" value="UniProtKB"/>
</dbReference>
<dbReference type="GO" id="GO:0010801">
    <property type="term" value="P:negative regulation of peptidyl-threonine phosphorylation"/>
    <property type="evidence" value="ECO:0000315"/>
    <property type="project" value="UniProtKB"/>
</dbReference>
<dbReference type="GO" id="GO:0042177">
    <property type="term" value="P:negative regulation of protein catabolic process"/>
    <property type="evidence" value="ECO:0000250"/>
    <property type="project" value="UniProtKB"/>
</dbReference>
<dbReference type="GO" id="GO:2000378">
    <property type="term" value="P:negative regulation of reactive oxygen species metabolic process"/>
    <property type="evidence" value="ECO:0000315"/>
    <property type="project" value="UniProtKB"/>
</dbReference>
<dbReference type="GO" id="GO:0045843">
    <property type="term" value="P:negative regulation of striated muscle tissue development"/>
    <property type="evidence" value="ECO:0000250"/>
    <property type="project" value="UniProtKB"/>
</dbReference>
<dbReference type="GO" id="GO:0000122">
    <property type="term" value="P:negative regulation of transcription by RNA polymerase II"/>
    <property type="evidence" value="ECO:0000315"/>
    <property type="project" value="UniProtKB"/>
</dbReference>
<dbReference type="GO" id="GO:0044546">
    <property type="term" value="P:NLRP3 inflammasome complex assembly"/>
    <property type="evidence" value="ECO:0000315"/>
    <property type="project" value="MGI"/>
</dbReference>
<dbReference type="GO" id="GO:0034983">
    <property type="term" value="P:peptidyl-lysine deacetylation"/>
    <property type="evidence" value="ECO:0000250"/>
    <property type="project" value="UniProtKB"/>
</dbReference>
<dbReference type="GO" id="GO:0051987">
    <property type="term" value="P:positive regulation of attachment of spindle microtubules to kinetochore"/>
    <property type="evidence" value="ECO:0000315"/>
    <property type="project" value="UniProtKB"/>
</dbReference>
<dbReference type="GO" id="GO:0051781">
    <property type="term" value="P:positive regulation of cell division"/>
    <property type="evidence" value="ECO:0000315"/>
    <property type="project" value="UniProtKB"/>
</dbReference>
<dbReference type="GO" id="GO:0043388">
    <property type="term" value="P:positive regulation of DNA binding"/>
    <property type="evidence" value="ECO:0000314"/>
    <property type="project" value="UniProtKB"/>
</dbReference>
<dbReference type="GO" id="GO:1900119">
    <property type="term" value="P:positive regulation of execution phase of apoptosis"/>
    <property type="evidence" value="ECO:0000315"/>
    <property type="project" value="UniProtKB"/>
</dbReference>
<dbReference type="GO" id="GO:0045723">
    <property type="term" value="P:positive regulation of fatty acid biosynthetic process"/>
    <property type="evidence" value="ECO:0007669"/>
    <property type="project" value="Ensembl"/>
</dbReference>
<dbReference type="GO" id="GO:0045836">
    <property type="term" value="P:positive regulation of meiotic nuclear division"/>
    <property type="evidence" value="ECO:0000315"/>
    <property type="project" value="UniProtKB"/>
</dbReference>
<dbReference type="GO" id="GO:1900195">
    <property type="term" value="P:positive regulation of oocyte maturation"/>
    <property type="evidence" value="ECO:0000315"/>
    <property type="project" value="UniProtKB"/>
</dbReference>
<dbReference type="GO" id="GO:0032436">
    <property type="term" value="P:positive regulation of proteasomal ubiquitin-dependent protein catabolic process"/>
    <property type="evidence" value="ECO:0000315"/>
    <property type="project" value="UniProtKB"/>
</dbReference>
<dbReference type="GO" id="GO:0045944">
    <property type="term" value="P:positive regulation of transcription by RNA polymerase II"/>
    <property type="evidence" value="ECO:0000315"/>
    <property type="project" value="UniProtKB"/>
</dbReference>
<dbReference type="GO" id="GO:0043161">
    <property type="term" value="P:proteasome-mediated ubiquitin-dependent protein catabolic process"/>
    <property type="evidence" value="ECO:0000250"/>
    <property type="project" value="UniProtKB"/>
</dbReference>
<dbReference type="GO" id="GO:0006476">
    <property type="term" value="P:protein deacetylation"/>
    <property type="evidence" value="ECO:0000314"/>
    <property type="project" value="UniProtKB"/>
</dbReference>
<dbReference type="GO" id="GO:0051726">
    <property type="term" value="P:regulation of cell cycle"/>
    <property type="evidence" value="ECO:0000250"/>
    <property type="project" value="UniProtKB"/>
</dbReference>
<dbReference type="GO" id="GO:0045598">
    <property type="term" value="P:regulation of fat cell differentiation"/>
    <property type="evidence" value="ECO:0000315"/>
    <property type="project" value="MGI"/>
</dbReference>
<dbReference type="GO" id="GO:0031641">
    <property type="term" value="P:regulation of myelination"/>
    <property type="evidence" value="ECO:0000315"/>
    <property type="project" value="UniProtKB"/>
</dbReference>
<dbReference type="CDD" id="cd01408">
    <property type="entry name" value="SIRT1"/>
    <property type="match status" value="1"/>
</dbReference>
<dbReference type="FunFam" id="3.40.50.1220:FF:000005">
    <property type="entry name" value="NAD-dependent deacetylase sirtuin-2"/>
    <property type="match status" value="1"/>
</dbReference>
<dbReference type="FunFam" id="3.30.1600.10:FF:000013">
    <property type="entry name" value="NAD-dependent protein deacetylase sirtuin-1"/>
    <property type="match status" value="1"/>
</dbReference>
<dbReference type="Gene3D" id="3.30.1600.10">
    <property type="entry name" value="SIR2/SIRT2 'Small Domain"/>
    <property type="match status" value="1"/>
</dbReference>
<dbReference type="Gene3D" id="3.40.50.1220">
    <property type="entry name" value="TPP-binding domain"/>
    <property type="match status" value="1"/>
</dbReference>
<dbReference type="InterPro" id="IPR029035">
    <property type="entry name" value="DHS-like_NAD/FAD-binding_dom"/>
</dbReference>
<dbReference type="InterPro" id="IPR050134">
    <property type="entry name" value="NAD-dep_sirtuin_deacylases"/>
</dbReference>
<dbReference type="InterPro" id="IPR003000">
    <property type="entry name" value="Sirtuin"/>
</dbReference>
<dbReference type="InterPro" id="IPR026591">
    <property type="entry name" value="Sirtuin_cat_small_dom_sf"/>
</dbReference>
<dbReference type="InterPro" id="IPR017328">
    <property type="entry name" value="Sirtuin_class_I"/>
</dbReference>
<dbReference type="InterPro" id="IPR026590">
    <property type="entry name" value="Ssirtuin_cat_dom"/>
</dbReference>
<dbReference type="PANTHER" id="PTHR11085:SF6">
    <property type="entry name" value="NAD-DEPENDENT PROTEIN DEACETYLASE SIRTUIN-2"/>
    <property type="match status" value="1"/>
</dbReference>
<dbReference type="PANTHER" id="PTHR11085">
    <property type="entry name" value="NAD-DEPENDENT PROTEIN DEACYLASE SIRTUIN-5, MITOCHONDRIAL-RELATED"/>
    <property type="match status" value="1"/>
</dbReference>
<dbReference type="Pfam" id="PF02146">
    <property type="entry name" value="SIR2"/>
    <property type="match status" value="1"/>
</dbReference>
<dbReference type="PIRSF" id="PIRSF037938">
    <property type="entry name" value="SIR2_euk"/>
    <property type="match status" value="1"/>
</dbReference>
<dbReference type="SUPFAM" id="SSF52467">
    <property type="entry name" value="DHS-like NAD/FAD-binding domain"/>
    <property type="match status" value="1"/>
</dbReference>
<dbReference type="PROSITE" id="PS50305">
    <property type="entry name" value="SIRTUIN"/>
    <property type="match status" value="1"/>
</dbReference>
<sequence length="389" mass="43256">MAEPDPSDPLETQAGKVQEAQDSDSDTEGGATGGEAEMDFLRNLFTQTLGLGSQKERLLDELTLEGVTRYMQSERCRKVICLVGAGISTSAGIPDFRSPSTGLYANLEKYHLPYPEAIFEISYFKKHPEPFFALAKELYPGQFKPTICHYFIRLLKEKGLLLRCYTQNIDTLERVAGLEPQDLVEAHGTFYTSHCVNTSCRKEYTMGWMKEKIFSEATPRCEQCQSVVKPDIVFFGENLPSRFFSCMQSDFSKVDLLIIMGTSLQVQPFASLISKAPLATPRLLINKEKTGQTDPFLGMMMGLGGGMDFDSKKAYRDVAWLGDCDQGCLALADLLGWKKELEDLVRREHANIDAQSGSQAPNPSTTISPGKSPPPAKEAARTKEKEEQQ</sequence>
<comment type="function">
    <text evidence="3 8 9 11 13 14 15 16 17 18 19 21">NAD-dependent protein deacetylase, which deacetylates internal lysines on histone and alpha-tubulin as well as many other proteins such as key transcription factors (PubMed:17521387, PubMed:17574768, PubMed:17681146, PubMed:19037106, PubMed:21791548, PubMed:21841822, PubMed:22014574, PubMed:24334550, PubMed:34059674). Participates in the modulation of multiple and diverse biological processes such as cell cycle control, genomic integrity, microtubule dynamics, cell differentiation, metabolic networks, and autophagy. Plays a major role in the control of cell cycle progression and genomic stability. Functions in the antephase checkpoint preventing precocious mitotic entry in response to microtubule stress agents, and hence allowing proper inheritance of chromosomes. Positively regulates the anaphase promoting complex/cyclosome (APC/C) ubiquitin ligase complex activity by deacetylating CDC20 and FZR1, then allowing progression through mitosis. Associates both with chromatin at transcriptional start sites (TSSs) and enhancers of active genes. Plays a role in cell cycle and chromatin compaction through epigenetic modulation of the regulation of histone H4 'Lys-20' methylation (H4K20me1) during early mitosis. Specifically deacetylates histone H4 at 'Lys-16' (H4K16ac) between the G2/M transition and metaphase enabling H4K20me1 deposition by KMT5A leading to ulterior levels of H4K20me2 and H4K20me3 deposition throughout cell cycle, and mitotic S-phase progression. Deacetylates KMT5A modulating KMT5A chromatin localization during the mitotic stress response. Also deacetylates histone H3 at 'Lys-57' (H3K56ac) during the mitotic G2/M transition. During oocyte meiosis progression, may deacetylate histone H4 at 'Lys-16' (H4K16ac) and alpha-tubulin, regulating spindle assembly and chromosome alignment by influencing microtubule dynamics and kinetochore function. Deacetylates histone H4 at 'Lys-16' (H4K16ac) at the VEGFA promoter and thereby contributes to regulate expression of VEGFA, a key regulator of angiogenesis. Deacetylates alpha-tubulin at 'Lys-40' and hence controls neuronal motility, oligodendroglial cell arbor projection processes and proliferation of non-neuronal cells (PubMed:17574768, PubMed:21791548). Phosphorylation at Ser-368 by a G1/S-specific cyclin E-CDK2 complex inactivates SIRT2-mediated alpha-tubulin deacetylation, negatively regulating cell adhesion, cell migration and neurite outgrowth during neuronal differentiation. Deacetylates PARD3 and participates in the regulation of Schwann cell peripheral myelination formation during early postnatal development and during postinjury remyelination. Involved in several cellular metabolic pathways. Plays a role in the regulation of blood glucose homeostasis by deacetylating and stabilizing phosphoenolpyruvate carboxykinase PCK1 activity in response to low nutrient availability. Acts as a key regulator in the pentose phosphate pathway (PPP) by deacetylating and activating the glucose-6-phosphate G6PD enzyme, and therefore, stimulates the production of cytosolic NADPH to counteract oxidative damage. Maintains energy homeostasis in response to nutrient deprivation as well as energy expenditure by inhibiting adipogenesis and promoting lipolysis. Attenuates adipocyte differentiation by deacetylating and promoting FOXO1 interaction to PPARG and subsequent repression of PPARG-dependent transcriptional activity (PubMed:17681146, PubMed:19037106). Plays a role in the regulation of lysosome-mediated degradation of protein aggregates by autophagy in neuronal cells (PubMed:17681146, PubMed:19037106). Deacetylates FOXO1 in response to oxidative stress or serum deprivation, thereby negatively regulating FOXO1-mediated autophagy (PubMed:17681146, PubMed:19037106). Deacetylates a broad range of transcription factors and co-regulators regulating target gene expression (PubMed:34059674). Deacetylates transcriptional factor FOXO3 stimulating the ubiquitin ligase SCF(SKP2)-mediated FOXO3 ubiquitination and degradation (PubMed:17521387, PubMed:21841822). Deacetylates HIF1A and therefore promotes HIF1A degradation and inhibition of HIF1A transcriptional activity in tumor cells in response to hypoxia. Deacetylates RELA in the cytoplasm inhibiting NF-kappaB-dependent transcription activation upon TNF-alpha stimulation. Inhibits transcriptional activation by deacetylating p53/TP53 and EP300. Also deacetylates EIF5A. Functions as a negative regulator on oxidative stress-tolerance in response to anoxia-reoxygenation conditions. Plays a role as tumor suppressor (PubMed:22014574, PubMed:23468428). In addition to protein deacetylase activity, also has activity toward long-chain fatty acyl groups and mediates protein-lysine demyristoylation and depalmitoylation of target proteins, such as ARF6 and KRAS, thereby regulating their association with membranes (By similarity).</text>
</comment>
<comment type="function">
    <molecule>Isoform 1</molecule>
    <text evidence="14">Deacetylates alpha-tubulin.</text>
</comment>
<comment type="function">
    <molecule>Isoform 2</molecule>
    <text evidence="14">Deacetylates alpha-tubulin.</text>
</comment>
<comment type="function">
    <molecule>Isoform 4</molecule>
    <text evidence="14">Deacetylates alpha-tubulin.</text>
</comment>
<comment type="catalytic activity">
    <reaction evidence="4 8 9 11 15 21">
        <text>N(6)-acetyl-L-lysyl-[protein] + NAD(+) + H2O = 2''-O-acetyl-ADP-D-ribose + nicotinamide + L-lysyl-[protein]</text>
        <dbReference type="Rhea" id="RHEA:43636"/>
        <dbReference type="Rhea" id="RHEA-COMP:9752"/>
        <dbReference type="Rhea" id="RHEA-COMP:10731"/>
        <dbReference type="ChEBI" id="CHEBI:15377"/>
        <dbReference type="ChEBI" id="CHEBI:17154"/>
        <dbReference type="ChEBI" id="CHEBI:29969"/>
        <dbReference type="ChEBI" id="CHEBI:57540"/>
        <dbReference type="ChEBI" id="CHEBI:61930"/>
        <dbReference type="ChEBI" id="CHEBI:83767"/>
        <dbReference type="EC" id="2.3.1.286"/>
    </reaction>
</comment>
<comment type="catalytic activity">
    <reaction evidence="3">
        <text>N(6)-tetradecanoyl-L-lysyl-[protein] + NAD(+) + H2O = 2''-O-tetradecanoyl-ADP-D-ribose + nicotinamide + L-lysyl-[protein]</text>
        <dbReference type="Rhea" id="RHEA:70567"/>
        <dbReference type="Rhea" id="RHEA-COMP:9752"/>
        <dbReference type="Rhea" id="RHEA-COMP:15437"/>
        <dbReference type="ChEBI" id="CHEBI:15377"/>
        <dbReference type="ChEBI" id="CHEBI:17154"/>
        <dbReference type="ChEBI" id="CHEBI:29969"/>
        <dbReference type="ChEBI" id="CHEBI:57540"/>
        <dbReference type="ChEBI" id="CHEBI:141129"/>
        <dbReference type="ChEBI" id="CHEBI:189674"/>
    </reaction>
    <physiologicalReaction direction="left-to-right" evidence="3">
        <dbReference type="Rhea" id="RHEA:70568"/>
    </physiologicalReaction>
</comment>
<comment type="catalytic activity">
    <reaction evidence="3">
        <text>N(6)-hexadecanoyl-L-lysyl-[protein] + NAD(+) + H2O = 2''-O-hexadecanoyl-ADP-D-ribose + nicotinamide + L-lysyl-[protein]</text>
        <dbReference type="Rhea" id="RHEA:70563"/>
        <dbReference type="Rhea" id="RHEA-COMP:9752"/>
        <dbReference type="Rhea" id="RHEA-COMP:14175"/>
        <dbReference type="ChEBI" id="CHEBI:15377"/>
        <dbReference type="ChEBI" id="CHEBI:17154"/>
        <dbReference type="ChEBI" id="CHEBI:29969"/>
        <dbReference type="ChEBI" id="CHEBI:57540"/>
        <dbReference type="ChEBI" id="CHEBI:138936"/>
        <dbReference type="ChEBI" id="CHEBI:189673"/>
    </reaction>
    <physiologicalReaction direction="left-to-right" evidence="3">
        <dbReference type="Rhea" id="RHEA:70564"/>
    </physiologicalReaction>
</comment>
<comment type="cofactor">
    <cofactor evidence="3">
        <name>Zn(2+)</name>
        <dbReference type="ChEBI" id="CHEBI:29105"/>
    </cofactor>
    <text evidence="3">Binds 1 zinc ion per subunit.</text>
</comment>
<comment type="activity regulation">
    <text evidence="3">Inhibited by Sirtinol, A3 and M15 small molecules. Inhibited by nicotinamide. Inhibited by a macrocyclic peptide inhibitor S2iL5. Inhibited by EP300-induced acetylation (By similarity).</text>
</comment>
<comment type="subunit">
    <text evidence="3 8 11 12 13 17">Interacts with CDC20, FOXO3 and FZR1 (PubMed:17521387, PubMed:22014574). Associates with microtubule in primary cortical mature neurons (By similarity). Homotrimer. Interacts (via both phosphorylated, unphosphorylated, active or inactive forms) with HDAC6; the interaction is necessary for the complex to interact with alpha-tubulin, suggesting that these proteins belong to a large complex that deacetylates the cytoskeleton. Interacts with FOXO1; the interaction is disrupted upon serum-starvation or oxidative stress, leading to increased level of acetylated FOXO1 and induction of autophagy (PubMed:17681146, PubMed:19037106). Interacts with RELA; the interaction occurs in the cytoplasm and is increased in a TNF-alpha-dependent manner. Interacts with HOXA10; the interaction is direct. Interacts with YWHAB and YWHAG; the interactions occur in a AKT-dependent manner and increase SIRT2-dependent TP53 deacetylation. Interacts with MAPK1/ERK2 and MAPK3/ERK1; the interactions increase SIRT2 stability and deacetylation activity. Interacts (phosphorylated form) with KMT5A isoform 2; the interaction is direct, stimulates KMT5A-mediated methyltransferase activity on histone at 'Lys-20' (H4K20me1) and is increased in a H(2)O(2)-induced oxidative stress-dependent manner. Interacts with G6PD; the interaction is enhanced by H(2)O(2) treatment. Interacts with a G1/S-specific cyclin E-CDK2 complex. Interacts with AURKA, CDK5R1 (p35 form) and CDK5 and HIF1A. Interacts with the tRNA ligase SARS1; recruited to the VEGFA promoter via interaction with SARS1 (By similarity). Isoform 2 and isoform 4 associate with microtubules in primary cortical mature neurons. Interacts with BEX4; negatively regulates alpha-tubulin deacetylation by SIRT2 (By similarity).</text>
</comment>
<comment type="interaction">
    <interactant intactId="EBI-911012">
        <id>Q8VDQ8</id>
    </interactant>
    <interactant intactId="EBI-2551389">
        <id>Q9JJ66</id>
        <label>Cdc20</label>
    </interactant>
    <organismsDiffer>false</organismsDiffer>
    <experiments>2</experiments>
</comment>
<comment type="interaction">
    <interactant intactId="EBI-911012">
        <id>Q8VDQ8</id>
    </interactant>
    <interactant intactId="EBI-5238560">
        <id>Q9R1K5</id>
        <label>Fzr1</label>
    </interactant>
    <organismsDiffer>false</organismsDiffer>
    <experiments>2</experiments>
</comment>
<comment type="interaction">
    <interactant intactId="EBI-911012">
        <id>Q8VDQ8</id>
    </interactant>
    <interactant intactId="EBI-448680">
        <id>O14965</id>
        <label>AURKA</label>
    </interactant>
    <organismsDiffer>true</organismsDiffer>
    <experiments>5</experiments>
</comment>
<comment type="subcellular location">
    <subcellularLocation>
        <location evidence="13 19 20">Nucleus</location>
    </subcellularLocation>
    <subcellularLocation>
        <location evidence="6 8 11 13 19 20">Cytoplasm</location>
    </subcellularLocation>
    <subcellularLocation>
        <location evidence="7">Cytoplasm</location>
        <location evidence="7">Perinuclear region</location>
    </subcellularLocation>
    <subcellularLocation>
        <location evidence="7">Perikaryon</location>
    </subcellularLocation>
    <subcellularLocation>
        <location evidence="3">Cytoplasm</location>
        <location evidence="3">Cytoskeleton</location>
    </subcellularLocation>
    <subcellularLocation>
        <location evidence="7">Cell projection</location>
    </subcellularLocation>
    <subcellularLocation>
        <location evidence="12">Cell projection</location>
        <location evidence="12">Growth cone</location>
    </subcellularLocation>
    <subcellularLocation>
        <location evidence="7">Myelin membrane</location>
    </subcellularLocation>
    <subcellularLocation>
        <location evidence="3">Cytoplasm</location>
        <location evidence="3">Cytoskeleton</location>
        <location evidence="3">Microtubule organizing center</location>
        <location evidence="3">Centrosome</location>
    </subcellularLocation>
    <subcellularLocation>
        <location evidence="19">Cytoplasm</location>
        <location evidence="19">Cytoskeleton</location>
        <location evidence="19">Spindle</location>
    </subcellularLocation>
    <subcellularLocation>
        <location evidence="3">Chromosome</location>
    </subcellularLocation>
    <subcellularLocation>
        <location evidence="19">Midbody</location>
    </subcellularLocation>
    <subcellularLocation>
        <location evidence="3">Cytoplasm</location>
        <location evidence="3">Cytoskeleton</location>
        <location evidence="3">Microtubule organizing center</location>
        <location evidence="3">Centrosome</location>
        <location evidence="3">Centriole</location>
    </subcellularLocation>
    <text evidence="3 7 8 12 19">Localizes in the cytoplasm during most of the cell cycle except in the G2/M transition and during mitosis, where it is localized in association with chromatin and induces deacetylation of histone at 'Lys-16' (H4K16ac). Colocalizes with KMT5A at mitotic foci. Colocalizes with CDK1 at centrosome during prophase and splindle fibers during metaphase. Colocalizes with Aurora kinase AURKA at centrosome during early prophase and in the centrioles and growing mitotic spindle throughout metaphase. Colocalizes with Aurora kinase AURKB during cytokinesis with the midbody. Colocalizes with microtubules (By similarity). Deacetylates FOXO3 in the cytoplasm (PubMed:17521387). Colocalizes with PLP1 in internodal regions of myelin sheat, at paranodal axoglial junction and Schmidt-Lanterman incisures (PubMed:16933150). Colocalizes with CDK5R1 in the perikaryon, neurites and growth cone of hippocampal neurons (PubMed:16933150). Colocalizes with alpha-tubulin in neuronal growth cone (PubMed:18332217). Localizes in the cytoplasm and nucleus of germinal vesicle (GV) stage oocytes (PubMed:24334550). Colocalizes with alpha-tubulin on the meiotic spindle as the oocytes enter into metaphase, and also during meiotic anaphase and telophase, especially with the midbody (PubMed:24334550).</text>
</comment>
<comment type="alternative products">
    <event type="alternative splicing"/>
    <isoform>
        <id>Q8VDQ8-1</id>
        <name>1</name>
        <name>SIRT2.1</name>
        <sequence type="displayed"/>
    </isoform>
    <isoform>
        <id>Q8VDQ8-2</id>
        <name>2</name>
        <name>SIRT2.2</name>
        <sequence type="described" ref="VSP_008729"/>
    </isoform>
    <isoform>
        <id>Q8VDQ8-3</id>
        <name>3</name>
        <sequence type="described" ref="VSP_055330"/>
    </isoform>
    <isoform>
        <id>Q8VDQ8-4</id>
        <name>4</name>
        <name>SIRT2.3</name>
        <sequence type="described" ref="VSP_055329"/>
    </isoform>
</comment>
<comment type="tissue specificity">
    <text evidence="7 10 11 12 14 16 19 20">Isoform 1 is weakly expressed in the cortex at postnatal(P) days P1, P3 and P7, and increases progressively between P17 and older adult cortex. Isoform 1 is also expressed in heart, liver and skeletal muscle, weakly expressed in the striatum and spinal cord. Isoform 2 is not expressed in the cortex at P1, P3 and P7, and increases strongly and progressively between P17 and older adult cortex. Isoform 2 is also expressed in the heart, liver, striatum and spinal cord. Isoform 4 is weakly expressed in older adult cortex and spinal cords. Expressed in the cortex. Expressed in postnatal sciatic nerves during myelination and during remyelination after nerve injury. Expressed in neurons, oligodendrocytes, Schwann cells, Purkinje cells and in astrocytes of white matter. Strongly expressed in preadipocytes compared with differentiated adipocytes. Expressed in cerebellar granule cells. Expressed in the inner ear: in the cochlea, expressed in types I and V fibrocytes in the spiral ligament (SL) and slightly in stria vascularis (SV); in the organ of Corti, expressed in some supporting cells; in the crista ampullaris, expressed in spiral ganglion cells; also expressed in the endolymphatic sac (ES) epithelial cells (at protein level). Expressed in the brain, spinal cord, optic nerve and hippocampus. Strongly expressed in 6-8 week-old ovulated meiosis II oocytes and weakly expressed in 45-58 week-old ovulated meiosis II oocytes. Expressed in the cochlea, vestibule and acoustic nerve of the inner ear.</text>
</comment>
<comment type="developmental stage">
    <text>Isoform 1 is expressed in the cortex at 15.5 dpc. Isoform 2 is not detected in the cortex at 15.5 dpc (at protein level).</text>
</comment>
<comment type="induction">
    <text evidence="8 11 13 14 16">Up-regulated in response to caloric restriction in white and brown adipose tissues. Up-regulated during cold exposure and down-regulated in higher ambient temperature in brown adipose tissue. Up-regulated after beta-adrenergic agonist (isoproterenol) treatment in white adipose tissue (at protein level). Up-regulated in response to caloric restriction in adipose tissue and kidney. Up-regulated in response to oxidative stress. Up-regulated during postnatal sciatic nerve myelination development and axonal regeneration. Down-regulated during preadipocyte differentiation. Down-regulated in Schwann dedifferentiated cells during Wallerian degeneration. Isoform 1 is up-regulated upon differentiation to a neuron-like phenotype.</text>
</comment>
<comment type="PTM">
    <text evidence="3">Phosphorylated at phosphoserine and phosphothreonine. Phosphorylated at Ser-368 by a mitotic kinase CDK1/cyclin B at the G2/M transition; phosphorylation regulates the delay in cell-cycle progression. Phosphorylated at Ser-368 by a mitotic kinase G1/S-specific cyclin E/Cdk2 complex; phosphorylation inactivates SIRT2-mediated alpha-tubulin deacetylation and thereby negatively regulates cell adhesion, cell migration and neurite outgrowth during neuronal differentiation. Phosphorylated by cyclin A/Cdk2 and p35-Cdk5 complexes and to a lesser extent by the cyclin D3/Cdk4 and cyclin B/Cdk1, in vitro. Dephosphorylated at Ser-368 by CDC14A and CDC14B around early anaphase (By similarity).</text>
</comment>
<comment type="PTM">
    <text evidence="3">Acetylated by EP300; acetylation leads both to the decreased of SIRT2-mediated alpha-tubulin deacetylase activity and SIRT2-mediated down-regulation of TP53 transcriptional activity.</text>
</comment>
<comment type="PTM">
    <text evidence="3">Ubiquitinated.</text>
</comment>
<comment type="disruption phenotype">
    <text evidence="16 17 18">Tissue-specific knockout of SIRT2 in Schwann cells of early postnatal mice leads to a transient delay in myelination, a reduction in the nerve conduction velocity and hyperacetylation of PARD3. The number of dividing Schwann cells in the developing nerve and alpha-tubulin acetylation are normal (PubMed:21949390). Mutant mice embryo grow normally and new born are healthy. Embryonic fibroblasts (MEFs) display reduced cell proliferation capacity, centrosome amplification and mitotic cell death. Nude mice inoculated with immortalized MEFs from mutant mice developed tumors. Adult mutant mice exhibit genomic instability and chromosomal aberrations, such as double-strand breaks (DSBs), with a gender-specific spectrum of tumorigenesis; females develop primarily mammary tumors and males develop tumors in several organs, including the liver, lung, pancreas, stomach, duodenum and prostate. Drastic increases of histone H4K16 acetylation and decreases of both histone methylation (H4K20me1) in metaphasic chromosomes and histone methylations (H4K20me2/3) in late M/early G1 but also throughout all phases of the cell cycle (PubMed:23468428).</text>
</comment>
<comment type="similarity">
    <text evidence="24">Belongs to the sirtuin family. Class I subfamily.</text>
</comment>
<evidence type="ECO:0000250" key="1"/>
<evidence type="ECO:0000250" key="2">
    <source>
        <dbReference type="UniProtKB" id="Q5RJQ4"/>
    </source>
</evidence>
<evidence type="ECO:0000250" key="3">
    <source>
        <dbReference type="UniProtKB" id="Q8IXJ6"/>
    </source>
</evidence>
<evidence type="ECO:0000255" key="4">
    <source>
        <dbReference type="PROSITE-ProRule" id="PRU00236"/>
    </source>
</evidence>
<evidence type="ECO:0000256" key="5">
    <source>
        <dbReference type="SAM" id="MobiDB-lite"/>
    </source>
</evidence>
<evidence type="ECO:0000269" key="6">
    <source>
    </source>
</evidence>
<evidence type="ECO:0000269" key="7">
    <source>
    </source>
</evidence>
<evidence type="ECO:0000269" key="8">
    <source>
    </source>
</evidence>
<evidence type="ECO:0000269" key="9">
    <source>
    </source>
</evidence>
<evidence type="ECO:0000269" key="10">
    <source>
    </source>
</evidence>
<evidence type="ECO:0000269" key="11">
    <source>
    </source>
</evidence>
<evidence type="ECO:0000269" key="12">
    <source>
    </source>
</evidence>
<evidence type="ECO:0000269" key="13">
    <source>
    </source>
</evidence>
<evidence type="ECO:0000269" key="14">
    <source>
    </source>
</evidence>
<evidence type="ECO:0000269" key="15">
    <source>
    </source>
</evidence>
<evidence type="ECO:0000269" key="16">
    <source>
    </source>
</evidence>
<evidence type="ECO:0000269" key="17">
    <source>
    </source>
</evidence>
<evidence type="ECO:0000269" key="18">
    <source>
    </source>
</evidence>
<evidence type="ECO:0000269" key="19">
    <source>
    </source>
</evidence>
<evidence type="ECO:0000269" key="20">
    <source>
    </source>
</evidence>
<evidence type="ECO:0000269" key="21">
    <source>
    </source>
</evidence>
<evidence type="ECO:0000303" key="22">
    <source>
    </source>
</evidence>
<evidence type="ECO:0000303" key="23">
    <source>
    </source>
</evidence>
<evidence type="ECO:0000305" key="24"/>
<evidence type="ECO:0007744" key="25">
    <source>
    </source>
</evidence>
<keyword id="KW-0007">Acetylation</keyword>
<keyword id="KW-0025">Alternative splicing</keyword>
<keyword id="KW-0072">Autophagy</keyword>
<keyword id="KW-0131">Cell cycle</keyword>
<keyword id="KW-0132">Cell division</keyword>
<keyword id="KW-1003">Cell membrane</keyword>
<keyword id="KW-0966">Cell projection</keyword>
<keyword id="KW-0158">Chromosome</keyword>
<keyword id="KW-0963">Cytoplasm</keyword>
<keyword id="KW-0206">Cytoskeleton</keyword>
<keyword id="KW-0221">Differentiation</keyword>
<keyword id="KW-0903">Direct protein sequencing</keyword>
<keyword id="KW-0469">Meiosis</keyword>
<keyword id="KW-0472">Membrane</keyword>
<keyword id="KW-0479">Metal-binding</keyword>
<keyword id="KW-0493">Microtubule</keyword>
<keyword id="KW-0498">Mitosis</keyword>
<keyword id="KW-0520">NAD</keyword>
<keyword id="KW-0524">Neurogenesis</keyword>
<keyword id="KW-0539">Nucleus</keyword>
<keyword id="KW-0597">Phosphoprotein</keyword>
<keyword id="KW-1185">Reference proteome</keyword>
<keyword id="KW-0804">Transcription</keyword>
<keyword id="KW-0805">Transcription regulation</keyword>
<keyword id="KW-0808">Transferase</keyword>
<keyword id="KW-0832">Ubl conjugation</keyword>
<keyword id="KW-0862">Zinc</keyword>